<protein>
    <recommendedName>
        <fullName>Retrovirus-related Pol polyprotein from transposon RE1</fullName>
    </recommendedName>
    <alternativeName>
        <fullName evidence="6">Retro element 1</fullName>
        <shortName evidence="6">AtRE1</shortName>
    </alternativeName>
    <domain>
        <recommendedName>
            <fullName>Protease RE1</fullName>
            <ecNumber>3.4.23.-</ecNumber>
        </recommendedName>
    </domain>
    <domain>
        <recommendedName>
            <fullName>Reverse transcriptase RE1</fullName>
            <ecNumber>2.7.7.49</ecNumber>
        </recommendedName>
    </domain>
    <domain>
        <recommendedName>
            <fullName>Endonuclease RE1</fullName>
        </recommendedName>
    </domain>
</protein>
<evidence type="ECO:0000250" key="1"/>
<evidence type="ECO:0000255" key="2"/>
<evidence type="ECO:0000255" key="3">
    <source>
        <dbReference type="PROSITE-ProRule" id="PRU00047"/>
    </source>
</evidence>
<evidence type="ECO:0000255" key="4">
    <source>
        <dbReference type="PROSITE-ProRule" id="PRU00457"/>
    </source>
</evidence>
<evidence type="ECO:0000256" key="5">
    <source>
        <dbReference type="SAM" id="MobiDB-lite"/>
    </source>
</evidence>
<evidence type="ECO:0000303" key="6">
    <source>
    </source>
</evidence>
<evidence type="ECO:0000305" key="7"/>
<evidence type="ECO:0000312" key="8">
    <source>
        <dbReference type="EMBL" id="AAK62788.1"/>
    </source>
</evidence>
<evidence type="ECO:0000312" key="9">
    <source>
        <dbReference type="EMBL" id="BAB84015.1"/>
    </source>
</evidence>
<sequence length="1466" mass="163905">MAAHAEELVLNNTSILNVNMSNVTKLTSTNYLMWSRQVHALFDGYELAGFLDGSTTMPPATIGTDAAPRVNPDYTRWKRQDKLIYSAVLGAISMSVQPAVSRATTAAQIWETLRKIYANPSYGHVTQLRTQLKQWTKGTKTIDDYMQGLVTRFDQLALLGKPMDHDEQVERVLENLPEEYKPVIDQIAAKDTPPTLTEIHERLLNHESKILAVSSATVIPITANAVSHRNTTTTNNNNNGNRNNRYDNRNNNNNSKPWQQSSTNFHPNNNQSKPYLGKCQICGVQGHSAKRCSQLQHFLSSVNSQQPPSPFTPWQPRANLALGSPYSSNNWLLDSGATHHITSDFNNLSLHQPYTGGDDVMVADGSTIPISHTGSTSLSTKSRPLNLHNILYVPNIHKNLISVYRLCNANGVSVEFFPASFQVKDLNTGVPLLQGKTKDELYEWPIASSQPVSLFASPSSKATHSSWHARLGHPAPSILNSVISNYSLSVLNPSHKFLSCSDCLINKSNKVPFSQSTINSTRPLEYIYSDVWSSPILSHDNYRYYVIFVDHFTRYTWLYPLKQKSQVKETFITFKNLLENRFQTRIGTFYSDNGGEFVALWEYFSQHGISHLTSPPHTPEHNGLSERKHRHIVETGLTLLSHASIPKTYWPYAFAVAVYLINRLPTPLLQLESPFQKLFGTSPNYDKLRVFGCACYPWLRPYNQHKLDDKSRQCVFLGYSLTQSAYLCLHLQTSRLYISRHVRFDENCFPFSNYLATLSPVQEQRRESSCVWSPHTTLPTRTPVLPAPSCSDPHHAATPPSSPSAPFRNSQVSSSNLDSSFSSSFPSSPEPTAPRQNGPQPTTQPTQTQTQTHSSQNTSQNNPTNESPSQLAQSLSTPAQSSSSSPSPTTSASSSSTSPTPPSILIHPPPPLAQIVNNNNQAPLNTHSMGTRAKAGIIKPNPKYSLAVSLAAESEPRTAIQALKDERWRNAMGSEINAQIGNHTWDLVPPPPSHVTIVGCRWIFTKKYNSDGSLNRYKARLVAKGYNQRPGLDYAETFSPVIKSTSIRIVLGVAVDRSWPIRQLDVNNAFLQGTLTDDVYMSQPPGFIDKDRPNYVCKLRKALYGLKQAPRAWYVELRNYLLTIGFVNSVSDTSLFVLQRGKSIVYMLVYVDDILITGNDPTLLHNTLDNLSQRFSVKDHEELHYFLGIEAKRVPTGLHLSQRRYILDLLARTNMITAKPVTTPMAPSPKLSLYSGTKLTDPTEYRGIVGSLQYLAFTRPDISYAVNRLSQFMHMPTEEHLQALKRILRYLAGTPNHGIFLKKGNTLSLHAYSDADWAGDKDDYVSTNGYIVYLGHHPISWSSKKQKGVVRSSTEAEYRSVANTSSEMQWICSLLTELGIRLTRPPVIYCDNVGATYLCANPVFHSRMKHIAIDYHFIRNQVQSGALRVVHVSTHDQLADTLTKPLSRTAFQNFASKIGVTRVPPS</sequence>
<dbReference type="EC" id="3.4.23.-"/>
<dbReference type="EC" id="2.7.7.49"/>
<dbReference type="EMBL" id="AB605839">
    <property type="protein sequence ID" value="BAK41511.1"/>
    <property type="molecule type" value="Genomic_DNA"/>
</dbReference>
<dbReference type="EMBL" id="AC027036">
    <property type="protein sequence ID" value="AAK62788.1"/>
    <property type="molecule type" value="Genomic_DNA"/>
</dbReference>
<dbReference type="EMBL" id="AB078516">
    <property type="protein sequence ID" value="BAB84015.1"/>
    <property type="molecule type" value="Genomic_DNA"/>
</dbReference>
<dbReference type="EMBL" id="CP002684">
    <property type="status" value="NOT_ANNOTATED_CDS"/>
    <property type="molecule type" value="Genomic_DNA"/>
</dbReference>
<dbReference type="EMBL" id="AB028223">
    <property type="protein sequence ID" value="BAA87949.1"/>
    <property type="status" value="ALT_FRAME"/>
    <property type="molecule type" value="mRNA"/>
</dbReference>
<dbReference type="PIR" id="T52436">
    <property type="entry name" value="T52436"/>
</dbReference>
<dbReference type="SMR" id="Q94HW2"/>
<dbReference type="FunCoup" id="Q94HW2">
    <property type="interactions" value="10"/>
</dbReference>
<dbReference type="STRING" id="3702.Q94HW2"/>
<dbReference type="MEROPS" id="A11.004"/>
<dbReference type="GlyGen" id="Q94HW2">
    <property type="glycosylation" value="3 sites"/>
</dbReference>
<dbReference type="Araport" id="AT1G58889"/>
<dbReference type="Araport" id="AT1G59265"/>
<dbReference type="TAIR" id="AT1G58889"/>
<dbReference type="TAIR" id="AT1G59265"/>
<dbReference type="InParanoid" id="Q94HW2"/>
<dbReference type="PRO" id="PR:Q94HW2"/>
<dbReference type="Proteomes" id="UP000006548">
    <property type="component" value="Chromosome 1"/>
</dbReference>
<dbReference type="ExpressionAtlas" id="Q94HW2">
    <property type="expression patterns" value="baseline and differential"/>
</dbReference>
<dbReference type="GO" id="GO:0004190">
    <property type="term" value="F:aspartic-type endopeptidase activity"/>
    <property type="evidence" value="ECO:0007669"/>
    <property type="project" value="UniProtKB-KW"/>
</dbReference>
<dbReference type="GO" id="GO:0004519">
    <property type="term" value="F:endonuclease activity"/>
    <property type="evidence" value="ECO:0007669"/>
    <property type="project" value="UniProtKB-KW"/>
</dbReference>
<dbReference type="GO" id="GO:0003676">
    <property type="term" value="F:nucleic acid binding"/>
    <property type="evidence" value="ECO:0007669"/>
    <property type="project" value="InterPro"/>
</dbReference>
<dbReference type="GO" id="GO:0003964">
    <property type="term" value="F:RNA-directed DNA polymerase activity"/>
    <property type="evidence" value="ECO:0007669"/>
    <property type="project" value="UniProtKB-EC"/>
</dbReference>
<dbReference type="GO" id="GO:0008270">
    <property type="term" value="F:zinc ion binding"/>
    <property type="evidence" value="ECO:0007669"/>
    <property type="project" value="UniProtKB-KW"/>
</dbReference>
<dbReference type="GO" id="GO:0015074">
    <property type="term" value="P:DNA integration"/>
    <property type="evidence" value="ECO:0007669"/>
    <property type="project" value="UniProtKB-KW"/>
</dbReference>
<dbReference type="GO" id="GO:0006310">
    <property type="term" value="P:DNA recombination"/>
    <property type="evidence" value="ECO:0007669"/>
    <property type="project" value="UniProtKB-KW"/>
</dbReference>
<dbReference type="GO" id="GO:0006508">
    <property type="term" value="P:proteolysis"/>
    <property type="evidence" value="ECO:0007669"/>
    <property type="project" value="UniProtKB-KW"/>
</dbReference>
<dbReference type="CDD" id="cd09272">
    <property type="entry name" value="RNase_HI_RT_Ty1"/>
    <property type="match status" value="1"/>
</dbReference>
<dbReference type="Gene3D" id="3.30.420.10">
    <property type="entry name" value="Ribonuclease H-like superfamily/Ribonuclease H"/>
    <property type="match status" value="1"/>
</dbReference>
<dbReference type="InterPro" id="IPR043502">
    <property type="entry name" value="DNA/RNA_pol_sf"/>
</dbReference>
<dbReference type="InterPro" id="IPR025724">
    <property type="entry name" value="GAG-pre-integrase_dom"/>
</dbReference>
<dbReference type="InterPro" id="IPR001584">
    <property type="entry name" value="Integrase_cat-core"/>
</dbReference>
<dbReference type="InterPro" id="IPR054722">
    <property type="entry name" value="PolX-like_BBD"/>
</dbReference>
<dbReference type="InterPro" id="IPR012337">
    <property type="entry name" value="RNaseH-like_sf"/>
</dbReference>
<dbReference type="InterPro" id="IPR036397">
    <property type="entry name" value="RNaseH_sf"/>
</dbReference>
<dbReference type="InterPro" id="IPR013103">
    <property type="entry name" value="RVT_2"/>
</dbReference>
<dbReference type="PANTHER" id="PTHR11439">
    <property type="entry name" value="GAG-POL-RELATED RETROTRANSPOSON"/>
    <property type="match status" value="1"/>
</dbReference>
<dbReference type="PANTHER" id="PTHR11439:SF489">
    <property type="entry name" value="RNA-DIRECTED DNA POLYMERASE"/>
    <property type="match status" value="1"/>
</dbReference>
<dbReference type="Pfam" id="PF13976">
    <property type="entry name" value="gag_pre-integrs"/>
    <property type="match status" value="1"/>
</dbReference>
<dbReference type="Pfam" id="PF22936">
    <property type="entry name" value="Pol_BBD"/>
    <property type="match status" value="1"/>
</dbReference>
<dbReference type="Pfam" id="PF14223">
    <property type="entry name" value="Retrotran_gag_2"/>
    <property type="match status" value="1"/>
</dbReference>
<dbReference type="Pfam" id="PF00665">
    <property type="entry name" value="rve"/>
    <property type="match status" value="1"/>
</dbReference>
<dbReference type="Pfam" id="PF07727">
    <property type="entry name" value="RVT_2"/>
    <property type="match status" value="1"/>
</dbReference>
<dbReference type="SUPFAM" id="SSF56672">
    <property type="entry name" value="DNA/RNA polymerases"/>
    <property type="match status" value="1"/>
</dbReference>
<dbReference type="SUPFAM" id="SSF53098">
    <property type="entry name" value="Ribonuclease H-like"/>
    <property type="match status" value="1"/>
</dbReference>
<dbReference type="PROSITE" id="PS50994">
    <property type="entry name" value="INTEGRASE"/>
    <property type="match status" value="1"/>
</dbReference>
<gene>
    <name type="primary">RE1</name>
    <name type="synonym">RF12</name>
    <name evidence="6" type="synonym">RF28</name>
    <name evidence="7" type="ordered locus">At1g58889</name>
    <name evidence="9" type="ORF">R18I</name>
</gene>
<gene>
    <name type="primary">RE1</name>
    <name evidence="7" type="ordered locus">At1g59265</name>
    <name evidence="8" type="ORF">T4M14.18</name>
</gene>
<feature type="chain" id="PRO_0000441908" description="Retrovirus-related Pol polyprotein from transposon RE1">
    <location>
        <begin position="1"/>
        <end position="1466"/>
    </location>
</feature>
<feature type="domain" description="Integrase catalytic" evidence="4">
    <location>
        <begin position="519"/>
        <end position="682"/>
    </location>
</feature>
<feature type="domain" description="Reverse transcriptase Ty1/copia-type" evidence="2">
    <location>
        <begin position="982"/>
        <end position="1225"/>
    </location>
</feature>
<feature type="zinc finger region" description="CCHC-type" evidence="3">
    <location>
        <begin position="278"/>
        <end position="294"/>
    </location>
</feature>
<feature type="region of interest" description="Disordered" evidence="5">
    <location>
        <begin position="227"/>
        <end position="270"/>
    </location>
</feature>
<feature type="region of interest" description="Disordered" evidence="5">
    <location>
        <begin position="772"/>
        <end position="927"/>
    </location>
</feature>
<feature type="compositionally biased region" description="Low complexity" evidence="5">
    <location>
        <begin position="229"/>
        <end position="254"/>
    </location>
</feature>
<feature type="compositionally biased region" description="Polar residues" evidence="5">
    <location>
        <begin position="255"/>
        <end position="270"/>
    </location>
</feature>
<feature type="compositionally biased region" description="Low complexity" evidence="5">
    <location>
        <begin position="796"/>
        <end position="827"/>
    </location>
</feature>
<feature type="compositionally biased region" description="Low complexity" evidence="5">
    <location>
        <begin position="836"/>
        <end position="898"/>
    </location>
</feature>
<feature type="compositionally biased region" description="Pro residues" evidence="5">
    <location>
        <begin position="899"/>
        <end position="912"/>
    </location>
</feature>
<feature type="compositionally biased region" description="Polar residues" evidence="5">
    <location>
        <begin position="915"/>
        <end position="927"/>
    </location>
</feature>
<feature type="active site" description="For protease activity" evidence="1">
    <location>
        <position position="334"/>
    </location>
</feature>
<feature type="binding site" evidence="4">
    <location>
        <position position="530"/>
    </location>
    <ligand>
        <name>Mg(2+)</name>
        <dbReference type="ChEBI" id="CHEBI:18420"/>
        <note>catalytic</note>
    </ligand>
</feature>
<feature type="binding site" evidence="4">
    <location>
        <position position="592"/>
    </location>
    <ligand>
        <name>Mg(2+)</name>
        <dbReference type="ChEBI" id="CHEBI:18420"/>
        <note>catalytic</note>
    </ligand>
</feature>
<feature type="sequence conflict" description="In Ref. 1; BAK41511." evidence="7" ref="1">
    <original>L</original>
    <variation>F</variation>
    <location>
        <position position="149"/>
    </location>
</feature>
<feature type="sequence conflict" description="In Ref. 4; BAA87949." evidence="7" ref="4">
    <original>N</original>
    <variation>T</variation>
    <location>
        <position position="235"/>
    </location>
</feature>
<feature type="sequence conflict" description="In Ref. 1; BAK41511." evidence="7" ref="1">
    <original>A</original>
    <variation>V</variation>
    <location>
        <position position="1019"/>
    </location>
</feature>
<keyword id="KW-0064">Aspartyl protease</keyword>
<keyword id="KW-0229">DNA integration</keyword>
<keyword id="KW-0233">DNA recombination</keyword>
<keyword id="KW-0255">Endonuclease</keyword>
<keyword id="KW-0378">Hydrolase</keyword>
<keyword id="KW-0460">Magnesium</keyword>
<keyword id="KW-0479">Metal-binding</keyword>
<keyword id="KW-0540">Nuclease</keyword>
<keyword id="KW-0645">Protease</keyword>
<keyword id="KW-1185">Reference proteome</keyword>
<keyword id="KW-0808">Transferase</keyword>
<keyword id="KW-0862">Zinc</keyword>
<keyword id="KW-0863">Zinc-finger</keyword>
<name>POLR1_ARATH</name>
<organism>
    <name type="scientific">Arabidopsis thaliana</name>
    <name type="common">Mouse-ear cress</name>
    <dbReference type="NCBI Taxonomy" id="3702"/>
    <lineage>
        <taxon>Eukaryota</taxon>
        <taxon>Viridiplantae</taxon>
        <taxon>Streptophyta</taxon>
        <taxon>Embryophyta</taxon>
        <taxon>Tracheophyta</taxon>
        <taxon>Spermatophyta</taxon>
        <taxon>Magnoliopsida</taxon>
        <taxon>eudicotyledons</taxon>
        <taxon>Gunneridae</taxon>
        <taxon>Pentapetalae</taxon>
        <taxon>rosids</taxon>
        <taxon>malvids</taxon>
        <taxon>Brassicales</taxon>
        <taxon>Brassicaceae</taxon>
        <taxon>Camelineae</taxon>
        <taxon>Arabidopsis</taxon>
    </lineage>
</organism>
<reference key="1">
    <citation type="journal article" date="2014" name="Mol. Genet. Genomics">
        <title>Genomic localization of AtRE1 and AtRE2, copia-type retrotransposons, in natural variants of Arabidopsis thaliana.</title>
        <authorList>
            <person name="Yamada M."/>
            <person name="Yamagishi Y."/>
            <person name="Akaoka M."/>
            <person name="Ito H."/>
            <person name="Kato A."/>
        </authorList>
    </citation>
    <scope>NUCLEOTIDE SEQUENCE [GENOMIC DNA]</scope>
    <source>
        <strain>cv. C24</strain>
    </source>
</reference>
<reference key="2">
    <citation type="journal article" date="2000" name="Nature">
        <title>Sequence and analysis of chromosome 1 of the plant Arabidopsis thaliana.</title>
        <authorList>
            <person name="Theologis A."/>
            <person name="Ecker J.R."/>
            <person name="Palm C.J."/>
            <person name="Federspiel N.A."/>
            <person name="Kaul S."/>
            <person name="White O."/>
            <person name="Alonso J."/>
            <person name="Altafi H."/>
            <person name="Araujo R."/>
            <person name="Bowman C.L."/>
            <person name="Brooks S.Y."/>
            <person name="Buehler E."/>
            <person name="Chan A."/>
            <person name="Chao Q."/>
            <person name="Chen H."/>
            <person name="Cheuk R.F."/>
            <person name="Chin C.W."/>
            <person name="Chung M.K."/>
            <person name="Conn L."/>
            <person name="Conway A.B."/>
            <person name="Conway A.R."/>
            <person name="Creasy T.H."/>
            <person name="Dewar K."/>
            <person name="Dunn P."/>
            <person name="Etgu P."/>
            <person name="Feldblyum T.V."/>
            <person name="Feng J.-D."/>
            <person name="Fong B."/>
            <person name="Fujii C.Y."/>
            <person name="Gill J.E."/>
            <person name="Goldsmith A.D."/>
            <person name="Haas B."/>
            <person name="Hansen N.F."/>
            <person name="Hughes B."/>
            <person name="Huizar L."/>
            <person name="Hunter J.L."/>
            <person name="Jenkins J."/>
            <person name="Johnson-Hopson C."/>
            <person name="Khan S."/>
            <person name="Khaykin E."/>
            <person name="Kim C.J."/>
            <person name="Koo H.L."/>
            <person name="Kremenetskaia I."/>
            <person name="Kurtz D.B."/>
            <person name="Kwan A."/>
            <person name="Lam B."/>
            <person name="Langin-Hooper S."/>
            <person name="Lee A."/>
            <person name="Lee J.M."/>
            <person name="Lenz C.A."/>
            <person name="Li J.H."/>
            <person name="Li Y.-P."/>
            <person name="Lin X."/>
            <person name="Liu S.X."/>
            <person name="Liu Z.A."/>
            <person name="Luros J.S."/>
            <person name="Maiti R."/>
            <person name="Marziali A."/>
            <person name="Militscher J."/>
            <person name="Miranda M."/>
            <person name="Nguyen M."/>
            <person name="Nierman W.C."/>
            <person name="Osborne B.I."/>
            <person name="Pai G."/>
            <person name="Peterson J."/>
            <person name="Pham P.K."/>
            <person name="Rizzo M."/>
            <person name="Rooney T."/>
            <person name="Rowley D."/>
            <person name="Sakano H."/>
            <person name="Salzberg S.L."/>
            <person name="Schwartz J.R."/>
            <person name="Shinn P."/>
            <person name="Southwick A.M."/>
            <person name="Sun H."/>
            <person name="Tallon L.J."/>
            <person name="Tambunga G."/>
            <person name="Toriumi M.J."/>
            <person name="Town C.D."/>
            <person name="Utterback T."/>
            <person name="Van Aken S."/>
            <person name="Vaysberg M."/>
            <person name="Vysotskaia V.S."/>
            <person name="Walker M."/>
            <person name="Wu D."/>
            <person name="Yu G."/>
            <person name="Fraser C.M."/>
            <person name="Venter J.C."/>
            <person name="Davis R.W."/>
        </authorList>
    </citation>
    <scope>NUCLEOTIDE SEQUENCE [LARGE SCALE GENOMIC DNA]</scope>
    <source>
        <strain>cv. Columbia</strain>
    </source>
</reference>
<reference key="3">
    <citation type="journal article" date="2017" name="Plant J.">
        <title>Araport11: a complete reannotation of the Arabidopsis thaliana reference genome.</title>
        <authorList>
            <person name="Cheng C.Y."/>
            <person name="Krishnakumar V."/>
            <person name="Chan A.P."/>
            <person name="Thibaud-Nissen F."/>
            <person name="Schobel S."/>
            <person name="Town C.D."/>
        </authorList>
    </citation>
    <scope>GENOME REANNOTATION</scope>
    <source>
        <strain>cv. Columbia</strain>
    </source>
</reference>
<reference key="4">
    <citation type="journal article" date="1999" name="Gene">
        <title>Isolation and analysis of cDNA within a 300 kb Arabidopsis thaliana genomic region located around the 100 map unit of chromosome 1.</title>
        <authorList>
            <person name="Kato A."/>
            <person name="Suzuki M."/>
            <person name="Kuwahara A."/>
            <person name="Ooe H."/>
            <person name="Higano-Inaba K."/>
            <person name="Komeda Y."/>
        </authorList>
    </citation>
    <scope>NUCLEOTIDE SEQUENCE [MRNA]</scope>
    <source>
        <strain>cv. Columbia</strain>
    </source>
</reference>
<reference key="5">
    <citation type="journal article" date="2000" name="Gene">
        <title>Isolation and characterization of copia-type retrotransposons in Arabidopsis thaliana.</title>
        <authorList>
            <person name="Kuwahara A."/>
            <person name="Kato A."/>
            <person name="Komeda Y."/>
        </authorList>
    </citation>
    <scope>GENE FAMILY</scope>
    <scope>NOMENCLATURE</scope>
    <source>
        <strain>cv. Columbia</strain>
    </source>
</reference>
<accession>Q94HW2</accession>
<accession>F7J134</accession>
<accession>Q9SLU4</accession>
<proteinExistence type="evidence at transcript level"/>
<comment type="catalytic activity">
    <reaction>
        <text>DNA(n) + a 2'-deoxyribonucleoside 5'-triphosphate = DNA(n+1) + diphosphate</text>
        <dbReference type="Rhea" id="RHEA:22508"/>
        <dbReference type="Rhea" id="RHEA-COMP:17339"/>
        <dbReference type="Rhea" id="RHEA-COMP:17340"/>
        <dbReference type="ChEBI" id="CHEBI:33019"/>
        <dbReference type="ChEBI" id="CHEBI:61560"/>
        <dbReference type="ChEBI" id="CHEBI:173112"/>
        <dbReference type="EC" id="2.7.7.49"/>
    </reaction>
</comment>
<comment type="sequence caution" evidence="7">
    <conflict type="frameshift">
        <sequence resource="EMBL-CDS" id="BAA87949"/>
    </conflict>
</comment>